<proteinExistence type="evidence at protein level"/>
<dbReference type="EMBL" id="M29264">
    <property type="protein sequence ID" value="AAA40136.1"/>
    <property type="molecule type" value="mRNA"/>
</dbReference>
<dbReference type="EMBL" id="AK019310">
    <property type="protein sequence ID" value="BAB31658.1"/>
    <property type="molecule type" value="mRNA"/>
</dbReference>
<dbReference type="EMBL" id="AK156845">
    <property type="protein sequence ID" value="BAE33873.1"/>
    <property type="molecule type" value="mRNA"/>
</dbReference>
<dbReference type="EMBL" id="AK167821">
    <property type="protein sequence ID" value="BAE39844.1"/>
    <property type="molecule type" value="mRNA"/>
</dbReference>
<dbReference type="EMBL" id="AK168144">
    <property type="protein sequence ID" value="BAE40110.1"/>
    <property type="molecule type" value="mRNA"/>
</dbReference>
<dbReference type="EMBL" id="BC021537">
    <property type="protein sequence ID" value="AAH21537.1"/>
    <property type="molecule type" value="mRNA"/>
</dbReference>
<dbReference type="CCDS" id="CCDS16577.1"/>
<dbReference type="PIR" id="B34501">
    <property type="entry name" value="B34501"/>
</dbReference>
<dbReference type="RefSeq" id="NP_033299.1">
    <property type="nucleotide sequence ID" value="NM_009273.4"/>
</dbReference>
<dbReference type="PDB" id="1914">
    <property type="method" value="X-ray"/>
    <property type="resolution" value="2.53 A"/>
    <property type="chains" value="A=1-110"/>
</dbReference>
<dbReference type="PDBsum" id="1914"/>
<dbReference type="SMR" id="P16254"/>
<dbReference type="BioGRID" id="203501">
    <property type="interactions" value="12"/>
</dbReference>
<dbReference type="FunCoup" id="P16254">
    <property type="interactions" value="2923"/>
</dbReference>
<dbReference type="IntAct" id="P16254">
    <property type="interactions" value="1"/>
</dbReference>
<dbReference type="STRING" id="10090.ENSMUSP00000009693"/>
<dbReference type="GlyGen" id="P16254">
    <property type="glycosylation" value="1 site, 1 O-linked glycan (1 site)"/>
</dbReference>
<dbReference type="iPTMnet" id="P16254"/>
<dbReference type="PhosphoSitePlus" id="P16254"/>
<dbReference type="SwissPalm" id="P16254"/>
<dbReference type="jPOST" id="P16254"/>
<dbReference type="PaxDb" id="10090-ENSMUSP00000009693"/>
<dbReference type="PeptideAtlas" id="P16254"/>
<dbReference type="ProteomicsDB" id="263345"/>
<dbReference type="Pumba" id="P16254"/>
<dbReference type="Antibodypedia" id="5798">
    <property type="antibodies" value="153 antibodies from 26 providers"/>
</dbReference>
<dbReference type="DNASU" id="20813"/>
<dbReference type="Ensembl" id="ENSMUST00000009693.15">
    <property type="protein sequence ID" value="ENSMUSP00000009693.9"/>
    <property type="gene ID" value="ENSMUSG00000009549.15"/>
</dbReference>
<dbReference type="GeneID" id="20813"/>
<dbReference type="KEGG" id="mmu:20813"/>
<dbReference type="UCSC" id="uc008lsa.1">
    <property type="organism name" value="mouse"/>
</dbReference>
<dbReference type="AGR" id="MGI:107169"/>
<dbReference type="CTD" id="6727"/>
<dbReference type="MGI" id="MGI:107169">
    <property type="gene designation" value="Srp14"/>
</dbReference>
<dbReference type="VEuPathDB" id="HostDB:ENSMUSG00000009549"/>
<dbReference type="eggNOG" id="KOG1761">
    <property type="taxonomic scope" value="Eukaryota"/>
</dbReference>
<dbReference type="GeneTree" id="ENSGT00390000008496"/>
<dbReference type="HOGENOM" id="CLU_094309_2_1_1"/>
<dbReference type="InParanoid" id="P16254"/>
<dbReference type="OMA" id="RFNGHNK"/>
<dbReference type="OrthoDB" id="19209at2759"/>
<dbReference type="PhylomeDB" id="P16254"/>
<dbReference type="TreeFam" id="TF106247"/>
<dbReference type="Reactome" id="R-MMU-1799339">
    <property type="pathway name" value="SRP-dependent cotranslational protein targeting to membrane"/>
</dbReference>
<dbReference type="Reactome" id="R-MMU-6798695">
    <property type="pathway name" value="Neutrophil degranulation"/>
</dbReference>
<dbReference type="BioGRID-ORCS" id="20813">
    <property type="hits" value="18 hits in 60 CRISPR screens"/>
</dbReference>
<dbReference type="ChiTaRS" id="Srp14">
    <property type="organism name" value="mouse"/>
</dbReference>
<dbReference type="EvolutionaryTrace" id="P16254"/>
<dbReference type="PRO" id="PR:P16254"/>
<dbReference type="Proteomes" id="UP000000589">
    <property type="component" value="Chromosome 2"/>
</dbReference>
<dbReference type="RNAct" id="P16254">
    <property type="molecule type" value="protein"/>
</dbReference>
<dbReference type="Bgee" id="ENSMUSG00000009549">
    <property type="expression patterns" value="Expressed in saccule of membranous labyrinth and 265 other cell types or tissues"/>
</dbReference>
<dbReference type="ExpressionAtlas" id="P16254">
    <property type="expression patterns" value="baseline and differential"/>
</dbReference>
<dbReference type="GO" id="GO:0005634">
    <property type="term" value="C:nucleus"/>
    <property type="evidence" value="ECO:0007669"/>
    <property type="project" value="Ensembl"/>
</dbReference>
<dbReference type="GO" id="GO:0005786">
    <property type="term" value="C:signal recognition particle, endoplasmic reticulum targeting"/>
    <property type="evidence" value="ECO:0007669"/>
    <property type="project" value="UniProtKB-KW"/>
</dbReference>
<dbReference type="GO" id="GO:0008312">
    <property type="term" value="F:7S RNA binding"/>
    <property type="evidence" value="ECO:0007669"/>
    <property type="project" value="InterPro"/>
</dbReference>
<dbReference type="GO" id="GO:0030942">
    <property type="term" value="F:endoplasmic reticulum signal peptide binding"/>
    <property type="evidence" value="ECO:0007669"/>
    <property type="project" value="InterPro"/>
</dbReference>
<dbReference type="GO" id="GO:0006614">
    <property type="term" value="P:SRP-dependent cotranslational protein targeting to membrane"/>
    <property type="evidence" value="ECO:0007669"/>
    <property type="project" value="InterPro"/>
</dbReference>
<dbReference type="FunFam" id="3.30.720.10:FF:000002">
    <property type="entry name" value="signal recognition particle 14 kDa protein-like"/>
    <property type="match status" value="1"/>
</dbReference>
<dbReference type="Gene3D" id="3.30.720.10">
    <property type="entry name" value="Signal recognition particle alu RNA binding heterodimer, srp9/1"/>
    <property type="match status" value="1"/>
</dbReference>
<dbReference type="InterPro" id="IPR003210">
    <property type="entry name" value="Signal_recog_particle_SRP14"/>
</dbReference>
<dbReference type="InterPro" id="IPR009018">
    <property type="entry name" value="Signal_recog_particle_SRP9/14"/>
</dbReference>
<dbReference type="PANTHER" id="PTHR12013">
    <property type="entry name" value="SIGNAL RECOGNITION PARTICLE 14 KD PROTEIN"/>
    <property type="match status" value="1"/>
</dbReference>
<dbReference type="Pfam" id="PF02290">
    <property type="entry name" value="SRP14"/>
    <property type="match status" value="1"/>
</dbReference>
<dbReference type="SUPFAM" id="SSF54762">
    <property type="entry name" value="Signal recognition particle alu RNA binding heterodimer, SRP9/14"/>
    <property type="match status" value="1"/>
</dbReference>
<accession>P16254</accession>
<accession>Q3TIK2</accession>
<sequence length="110" mass="12510">MVLLESEQFLTELTRLFQKCRSSGSVFITLKKYDGRTKPIPRKSSVEGLEPAENKCLLRATDGKRKISTVVSSKEVNKFQMAYSNLLRANMDGLKKRDKKNKSKKSKPAQ</sequence>
<reference key="1">
    <citation type="journal article" date="1989" name="Proc. Natl. Acad. Sci. U.S.A.">
        <title>Isolation of a cDNA clone of the 14-kDa subunit of the signal recognition particle by cross-hybridization of differently primed polymerase chain reactions.</title>
        <authorList>
            <person name="Strub K."/>
            <person name="Walter P."/>
        </authorList>
    </citation>
    <scope>NUCLEOTIDE SEQUENCE [MRNA]</scope>
    <scope>PROTEIN SEQUENCE OF 1-19 AND 77-95</scope>
</reference>
<reference key="2">
    <citation type="journal article" date="2005" name="Science">
        <title>The transcriptional landscape of the mammalian genome.</title>
        <authorList>
            <person name="Carninci P."/>
            <person name="Kasukawa T."/>
            <person name="Katayama S."/>
            <person name="Gough J."/>
            <person name="Frith M.C."/>
            <person name="Maeda N."/>
            <person name="Oyama R."/>
            <person name="Ravasi T."/>
            <person name="Lenhard B."/>
            <person name="Wells C."/>
            <person name="Kodzius R."/>
            <person name="Shimokawa K."/>
            <person name="Bajic V.B."/>
            <person name="Brenner S.E."/>
            <person name="Batalov S."/>
            <person name="Forrest A.R."/>
            <person name="Zavolan M."/>
            <person name="Davis M.J."/>
            <person name="Wilming L.G."/>
            <person name="Aidinis V."/>
            <person name="Allen J.E."/>
            <person name="Ambesi-Impiombato A."/>
            <person name="Apweiler R."/>
            <person name="Aturaliya R.N."/>
            <person name="Bailey T.L."/>
            <person name="Bansal M."/>
            <person name="Baxter L."/>
            <person name="Beisel K.W."/>
            <person name="Bersano T."/>
            <person name="Bono H."/>
            <person name="Chalk A.M."/>
            <person name="Chiu K.P."/>
            <person name="Choudhary V."/>
            <person name="Christoffels A."/>
            <person name="Clutterbuck D.R."/>
            <person name="Crowe M.L."/>
            <person name="Dalla E."/>
            <person name="Dalrymple B.P."/>
            <person name="de Bono B."/>
            <person name="Della Gatta G."/>
            <person name="di Bernardo D."/>
            <person name="Down T."/>
            <person name="Engstrom P."/>
            <person name="Fagiolini M."/>
            <person name="Faulkner G."/>
            <person name="Fletcher C.F."/>
            <person name="Fukushima T."/>
            <person name="Furuno M."/>
            <person name="Futaki S."/>
            <person name="Gariboldi M."/>
            <person name="Georgii-Hemming P."/>
            <person name="Gingeras T.R."/>
            <person name="Gojobori T."/>
            <person name="Green R.E."/>
            <person name="Gustincich S."/>
            <person name="Harbers M."/>
            <person name="Hayashi Y."/>
            <person name="Hensch T.K."/>
            <person name="Hirokawa N."/>
            <person name="Hill D."/>
            <person name="Huminiecki L."/>
            <person name="Iacono M."/>
            <person name="Ikeo K."/>
            <person name="Iwama A."/>
            <person name="Ishikawa T."/>
            <person name="Jakt M."/>
            <person name="Kanapin A."/>
            <person name="Katoh M."/>
            <person name="Kawasawa Y."/>
            <person name="Kelso J."/>
            <person name="Kitamura H."/>
            <person name="Kitano H."/>
            <person name="Kollias G."/>
            <person name="Krishnan S.P."/>
            <person name="Kruger A."/>
            <person name="Kummerfeld S.K."/>
            <person name="Kurochkin I.V."/>
            <person name="Lareau L.F."/>
            <person name="Lazarevic D."/>
            <person name="Lipovich L."/>
            <person name="Liu J."/>
            <person name="Liuni S."/>
            <person name="McWilliam S."/>
            <person name="Madan Babu M."/>
            <person name="Madera M."/>
            <person name="Marchionni L."/>
            <person name="Matsuda H."/>
            <person name="Matsuzawa S."/>
            <person name="Miki H."/>
            <person name="Mignone F."/>
            <person name="Miyake S."/>
            <person name="Morris K."/>
            <person name="Mottagui-Tabar S."/>
            <person name="Mulder N."/>
            <person name="Nakano N."/>
            <person name="Nakauchi H."/>
            <person name="Ng P."/>
            <person name="Nilsson R."/>
            <person name="Nishiguchi S."/>
            <person name="Nishikawa S."/>
            <person name="Nori F."/>
            <person name="Ohara O."/>
            <person name="Okazaki Y."/>
            <person name="Orlando V."/>
            <person name="Pang K.C."/>
            <person name="Pavan W.J."/>
            <person name="Pavesi G."/>
            <person name="Pesole G."/>
            <person name="Petrovsky N."/>
            <person name="Piazza S."/>
            <person name="Reed J."/>
            <person name="Reid J.F."/>
            <person name="Ring B.Z."/>
            <person name="Ringwald M."/>
            <person name="Rost B."/>
            <person name="Ruan Y."/>
            <person name="Salzberg S.L."/>
            <person name="Sandelin A."/>
            <person name="Schneider C."/>
            <person name="Schoenbach C."/>
            <person name="Sekiguchi K."/>
            <person name="Semple C.A."/>
            <person name="Seno S."/>
            <person name="Sessa L."/>
            <person name="Sheng Y."/>
            <person name="Shibata Y."/>
            <person name="Shimada H."/>
            <person name="Shimada K."/>
            <person name="Silva D."/>
            <person name="Sinclair B."/>
            <person name="Sperling S."/>
            <person name="Stupka E."/>
            <person name="Sugiura K."/>
            <person name="Sultana R."/>
            <person name="Takenaka Y."/>
            <person name="Taki K."/>
            <person name="Tammoja K."/>
            <person name="Tan S.L."/>
            <person name="Tang S."/>
            <person name="Taylor M.S."/>
            <person name="Tegner J."/>
            <person name="Teichmann S.A."/>
            <person name="Ueda H.R."/>
            <person name="van Nimwegen E."/>
            <person name="Verardo R."/>
            <person name="Wei C.L."/>
            <person name="Yagi K."/>
            <person name="Yamanishi H."/>
            <person name="Zabarovsky E."/>
            <person name="Zhu S."/>
            <person name="Zimmer A."/>
            <person name="Hide W."/>
            <person name="Bult C."/>
            <person name="Grimmond S.M."/>
            <person name="Teasdale R.D."/>
            <person name="Liu E.T."/>
            <person name="Brusic V."/>
            <person name="Quackenbush J."/>
            <person name="Wahlestedt C."/>
            <person name="Mattick J.S."/>
            <person name="Hume D.A."/>
            <person name="Kai C."/>
            <person name="Sasaki D."/>
            <person name="Tomaru Y."/>
            <person name="Fukuda S."/>
            <person name="Kanamori-Katayama M."/>
            <person name="Suzuki M."/>
            <person name="Aoki J."/>
            <person name="Arakawa T."/>
            <person name="Iida J."/>
            <person name="Imamura K."/>
            <person name="Itoh M."/>
            <person name="Kato T."/>
            <person name="Kawaji H."/>
            <person name="Kawagashira N."/>
            <person name="Kawashima T."/>
            <person name="Kojima M."/>
            <person name="Kondo S."/>
            <person name="Konno H."/>
            <person name="Nakano K."/>
            <person name="Ninomiya N."/>
            <person name="Nishio T."/>
            <person name="Okada M."/>
            <person name="Plessy C."/>
            <person name="Shibata K."/>
            <person name="Shiraki T."/>
            <person name="Suzuki S."/>
            <person name="Tagami M."/>
            <person name="Waki K."/>
            <person name="Watahiki A."/>
            <person name="Okamura-Oho Y."/>
            <person name="Suzuki H."/>
            <person name="Kawai J."/>
            <person name="Hayashizaki Y."/>
        </authorList>
    </citation>
    <scope>NUCLEOTIDE SEQUENCE [LARGE SCALE MRNA]</scope>
    <source>
        <strain>C57BL/6J</strain>
        <strain>NOD</strain>
        <tissue>Hippocampus</tissue>
        <tissue>Spleen</tissue>
    </source>
</reference>
<reference key="3">
    <citation type="journal article" date="2004" name="Genome Res.">
        <title>The status, quality, and expansion of the NIH full-length cDNA project: the Mammalian Gene Collection (MGC).</title>
        <authorList>
            <consortium name="The MGC Project Team"/>
        </authorList>
    </citation>
    <scope>NUCLEOTIDE SEQUENCE [LARGE SCALE MRNA]</scope>
    <source>
        <strain>FVB/N</strain>
        <tissue>Mammary gland</tissue>
    </source>
</reference>
<reference key="4">
    <citation type="journal article" date="2007" name="Proc. Natl. Acad. Sci. U.S.A.">
        <title>Large-scale phosphorylation analysis of mouse liver.</title>
        <authorList>
            <person name="Villen J."/>
            <person name="Beausoleil S.A."/>
            <person name="Gerber S.A."/>
            <person name="Gygi S.P."/>
        </authorList>
    </citation>
    <scope>PHOSPHORYLATION [LARGE SCALE ANALYSIS] AT SER-45</scope>
    <scope>IDENTIFICATION BY MASS SPECTROMETRY [LARGE SCALE ANALYSIS]</scope>
    <source>
        <tissue>Liver</tissue>
    </source>
</reference>
<reference key="5">
    <citation type="journal article" date="2010" name="Cell">
        <title>A tissue-specific atlas of mouse protein phosphorylation and expression.</title>
        <authorList>
            <person name="Huttlin E.L."/>
            <person name="Jedrychowski M.P."/>
            <person name="Elias J.E."/>
            <person name="Goswami T."/>
            <person name="Rad R."/>
            <person name="Beausoleil S.A."/>
            <person name="Villen J."/>
            <person name="Haas W."/>
            <person name="Sowa M.E."/>
            <person name="Gygi S.P."/>
        </authorList>
    </citation>
    <scope>PHOSPHORYLATION [LARGE SCALE ANALYSIS] AT SER-45</scope>
    <scope>IDENTIFICATION BY MASS SPECTROMETRY [LARGE SCALE ANALYSIS]</scope>
    <source>
        <tissue>Brain</tissue>
        <tissue>Brown adipose tissue</tissue>
        <tissue>Heart</tissue>
        <tissue>Kidney</tissue>
        <tissue>Liver</tissue>
        <tissue>Lung</tissue>
        <tissue>Pancreas</tissue>
        <tissue>Spleen</tissue>
        <tissue>Testis</tissue>
    </source>
</reference>
<reference key="6">
    <citation type="journal article" date="1997" name="EMBO J.">
        <title>The crystal structure of the signal recognition particle Alu RNA binding heterodimer, SRP9/14.</title>
        <authorList>
            <person name="Birse D.E."/>
            <person name="Kapp U."/>
            <person name="Strub K."/>
            <person name="Cusack S."/>
            <person name="Aaberg A."/>
        </authorList>
    </citation>
    <scope>X-RAY CRYSTALLOGRAPHY (2.53 ANGSTROMS) IN COMPLEX WITH SRP9</scope>
</reference>
<comment type="function">
    <text evidence="2">Component of the signal recognition particle (SRP) complex, a ribonucleoprotein complex that mediates the cotranslational targeting of secretory and membrane proteins to the endoplasmic reticulum (ER) (By similarity). SRP9 together with SRP14 and the Alu portion of the SRP RNA, constitutes the elongation arrest domain of SRP (By similarity). The complex of SRP9 and SRP14 is required for SRP RNA binding (By similarity).</text>
</comment>
<comment type="subunit">
    <text evidence="1 4">Heterodimer with SRP9; binds RNA as heterodimer (By similarity). Component of a signal recognition particle (SRP) complex that consists of a 7SL RNA molecule of 300 nucleotides and six protein subunits: SRP72, SRP68, SRP54, SRP19, SRP14 and SRP9 (PubMed:9233785).</text>
</comment>
<comment type="subcellular location">
    <subcellularLocation>
        <location>Cytoplasm</location>
    </subcellularLocation>
</comment>
<comment type="similarity">
    <text evidence="5">Belongs to the SRP14 family.</text>
</comment>
<keyword id="KW-0002">3D-structure</keyword>
<keyword id="KW-0963">Cytoplasm</keyword>
<keyword id="KW-0903">Direct protein sequencing</keyword>
<keyword id="KW-0597">Phosphoprotein</keyword>
<keyword id="KW-1185">Reference proteome</keyword>
<keyword id="KW-0687">Ribonucleoprotein</keyword>
<keyword id="KW-0694">RNA-binding</keyword>
<keyword id="KW-0733">Signal recognition particle</keyword>
<organism>
    <name type="scientific">Mus musculus</name>
    <name type="common">Mouse</name>
    <dbReference type="NCBI Taxonomy" id="10090"/>
    <lineage>
        <taxon>Eukaryota</taxon>
        <taxon>Metazoa</taxon>
        <taxon>Chordata</taxon>
        <taxon>Craniata</taxon>
        <taxon>Vertebrata</taxon>
        <taxon>Euteleostomi</taxon>
        <taxon>Mammalia</taxon>
        <taxon>Eutheria</taxon>
        <taxon>Euarchontoglires</taxon>
        <taxon>Glires</taxon>
        <taxon>Rodentia</taxon>
        <taxon>Myomorpha</taxon>
        <taxon>Muroidea</taxon>
        <taxon>Muridae</taxon>
        <taxon>Murinae</taxon>
        <taxon>Mus</taxon>
        <taxon>Mus</taxon>
    </lineage>
</organism>
<protein>
    <recommendedName>
        <fullName>Signal recognition particle 14 kDa protein</fullName>
        <shortName>SRP14</shortName>
    </recommendedName>
</protein>
<name>SRP14_MOUSE</name>
<evidence type="ECO:0000250" key="1">
    <source>
        <dbReference type="UniProtKB" id="P16255"/>
    </source>
</evidence>
<evidence type="ECO:0000250" key="2">
    <source>
        <dbReference type="UniProtKB" id="P37108"/>
    </source>
</evidence>
<evidence type="ECO:0000256" key="3">
    <source>
        <dbReference type="SAM" id="MobiDB-lite"/>
    </source>
</evidence>
<evidence type="ECO:0000269" key="4">
    <source>
    </source>
</evidence>
<evidence type="ECO:0000305" key="5"/>
<evidence type="ECO:0007744" key="6">
    <source>
    </source>
</evidence>
<evidence type="ECO:0007744" key="7">
    <source>
    </source>
</evidence>
<evidence type="ECO:0007829" key="8">
    <source>
        <dbReference type="PDB" id="1914"/>
    </source>
</evidence>
<gene>
    <name type="primary">Srp14</name>
</gene>
<feature type="chain" id="PRO_0000135191" description="Signal recognition particle 14 kDa protein">
    <location>
        <begin position="1"/>
        <end position="110"/>
    </location>
</feature>
<feature type="region of interest" description="Disordered" evidence="3">
    <location>
        <begin position="90"/>
        <end position="110"/>
    </location>
</feature>
<feature type="compositionally biased region" description="Basic residues" evidence="3">
    <location>
        <begin position="96"/>
        <end position="110"/>
    </location>
</feature>
<feature type="modified residue" description="Phosphoserine" evidence="6 7">
    <location>
        <position position="45"/>
    </location>
</feature>
<feature type="helix" evidence="8">
    <location>
        <begin position="6"/>
        <end position="19"/>
    </location>
</feature>
<feature type="strand" evidence="8">
    <location>
        <begin position="21"/>
        <end position="23"/>
    </location>
</feature>
<feature type="strand" evidence="8">
    <location>
        <begin position="26"/>
        <end position="33"/>
    </location>
</feature>
<feature type="strand" evidence="8">
    <location>
        <begin position="55"/>
        <end position="64"/>
    </location>
</feature>
<feature type="strand" evidence="8">
    <location>
        <begin position="66"/>
        <end position="72"/>
    </location>
</feature>
<feature type="helix" evidence="8">
    <location>
        <begin position="76"/>
        <end position="90"/>
    </location>
</feature>